<keyword id="KW-0044">Antibiotic</keyword>
<keyword id="KW-0929">Antimicrobial</keyword>
<keyword id="KW-1015">Disulfide bond</keyword>
<keyword id="KW-0964">Secreted</keyword>
<keyword id="KW-0732">Signal</keyword>
<proteinExistence type="inferred from homology"/>
<organism>
    <name type="scientific">Philodryas olfersii</name>
    <name type="common">Green snake</name>
    <dbReference type="NCBI Taxonomy" id="120305"/>
    <lineage>
        <taxon>Eukaryota</taxon>
        <taxon>Metazoa</taxon>
        <taxon>Chordata</taxon>
        <taxon>Craniata</taxon>
        <taxon>Vertebrata</taxon>
        <taxon>Euteleostomi</taxon>
        <taxon>Lepidosauria</taxon>
        <taxon>Squamata</taxon>
        <taxon>Bifurcata</taxon>
        <taxon>Unidentata</taxon>
        <taxon>Episquamata</taxon>
        <taxon>Toxicofera</taxon>
        <taxon>Serpentes</taxon>
        <taxon>Colubroidea</taxon>
        <taxon>Dipsadidae</taxon>
        <taxon>Philodryas</taxon>
    </lineage>
</organism>
<sequence>MKATLLLLLLFAVILPGTISAEQEKPGSCPNVDMPIPPLGLCKTTCSKDSDCSETKKCCKNGCGFMTCTTARP</sequence>
<evidence type="ECO:0000250" key="1">
    <source>
        <dbReference type="UniProtKB" id="P83952"/>
    </source>
</evidence>
<evidence type="ECO:0000255" key="2"/>
<evidence type="ECO:0000255" key="3">
    <source>
        <dbReference type="PROSITE-ProRule" id="PRU00722"/>
    </source>
</evidence>
<evidence type="ECO:0000303" key="4">
    <source>
    </source>
</evidence>
<evidence type="ECO:0000305" key="5"/>
<evidence type="ECO:0000305" key="6">
    <source>
    </source>
</evidence>
<accession>A7X4K7</accession>
<comment type="function">
    <text evidence="1">Damages membranes of susceptible bacteria. Has no hemolytic activity. Not toxic to mice. Does not inhibit the proteinases elastase and cathepsin G.</text>
</comment>
<comment type="subcellular location">
    <subcellularLocation>
        <location evidence="6">Secreted</location>
    </subcellularLocation>
</comment>
<comment type="tissue specificity">
    <text evidence="6">Expressed by the venom gland.</text>
</comment>
<comment type="similarity">
    <text evidence="5">Belongs to the venom waprin family.</text>
</comment>
<feature type="signal peptide" evidence="2">
    <location>
        <begin position="1"/>
        <end position="21"/>
    </location>
</feature>
<feature type="chain" id="PRO_0000314688" description="Waprin-Phi2">
    <location>
        <begin position="22"/>
        <end position="73"/>
    </location>
</feature>
<feature type="domain" description="WAP" evidence="3">
    <location>
        <begin position="22"/>
        <end position="72"/>
    </location>
</feature>
<feature type="disulfide bond" evidence="3">
    <location>
        <begin position="29"/>
        <end position="59"/>
    </location>
</feature>
<feature type="disulfide bond" evidence="3">
    <location>
        <begin position="42"/>
        <end position="63"/>
    </location>
</feature>
<feature type="disulfide bond" evidence="3">
    <location>
        <begin position="46"/>
        <end position="58"/>
    </location>
</feature>
<feature type="disulfide bond" evidence="3">
    <location>
        <begin position="52"/>
        <end position="68"/>
    </location>
</feature>
<protein>
    <recommendedName>
        <fullName evidence="4">Waprin-Phi2</fullName>
    </recommendedName>
</protein>
<name>WAP2_PHIOL</name>
<reference key="1">
    <citation type="journal article" date="2008" name="Mol. Cell. Proteomics">
        <title>Evolution of an arsenal: structural and functional diversification of the venom system in the advanced snakes (Caenophidia).</title>
        <authorList>
            <person name="Fry B.G."/>
            <person name="Scheib H."/>
            <person name="van der Weerd L."/>
            <person name="Young B."/>
            <person name="McNaughtan J."/>
            <person name="Ramjan S.F.R."/>
            <person name="Vidal N."/>
            <person name="Poelmann R.E."/>
            <person name="Norman J.A."/>
        </authorList>
    </citation>
    <scope>NUCLEOTIDE SEQUENCE [MRNA]</scope>
    <source>
        <tissue>Venom gland</tissue>
    </source>
</reference>
<dbReference type="EMBL" id="EU029743">
    <property type="protein sequence ID" value="ABU68543.1"/>
    <property type="molecule type" value="mRNA"/>
</dbReference>
<dbReference type="SMR" id="A7X4K7"/>
<dbReference type="GO" id="GO:0005576">
    <property type="term" value="C:extracellular region"/>
    <property type="evidence" value="ECO:0000250"/>
    <property type="project" value="UniProtKB"/>
</dbReference>
<dbReference type="GO" id="GO:0005615">
    <property type="term" value="C:extracellular space"/>
    <property type="evidence" value="ECO:0007669"/>
    <property type="project" value="TreeGrafter"/>
</dbReference>
<dbReference type="GO" id="GO:0030414">
    <property type="term" value="F:peptidase inhibitor activity"/>
    <property type="evidence" value="ECO:0007669"/>
    <property type="project" value="InterPro"/>
</dbReference>
<dbReference type="GO" id="GO:0048019">
    <property type="term" value="F:receptor antagonist activity"/>
    <property type="evidence" value="ECO:0007669"/>
    <property type="project" value="TreeGrafter"/>
</dbReference>
<dbReference type="GO" id="GO:0050431">
    <property type="term" value="F:transforming growth factor beta binding"/>
    <property type="evidence" value="ECO:0007669"/>
    <property type="project" value="TreeGrafter"/>
</dbReference>
<dbReference type="GO" id="GO:0042742">
    <property type="term" value="P:defense response to bacterium"/>
    <property type="evidence" value="ECO:0007669"/>
    <property type="project" value="UniProtKB-KW"/>
</dbReference>
<dbReference type="GO" id="GO:0007179">
    <property type="term" value="P:transforming growth factor beta receptor signaling pathway"/>
    <property type="evidence" value="ECO:0007669"/>
    <property type="project" value="TreeGrafter"/>
</dbReference>
<dbReference type="GO" id="GO:0044278">
    <property type="term" value="P:venom-mediated disruption of cell wall in another organism"/>
    <property type="evidence" value="ECO:0000250"/>
    <property type="project" value="UniProtKB"/>
</dbReference>
<dbReference type="FunFam" id="4.10.75.10:FF:000001">
    <property type="entry name" value="Anosmin 1"/>
    <property type="match status" value="1"/>
</dbReference>
<dbReference type="Gene3D" id="4.10.75.10">
    <property type="entry name" value="Elafin-like"/>
    <property type="match status" value="1"/>
</dbReference>
<dbReference type="InterPro" id="IPR036645">
    <property type="entry name" value="Elafin-like_sf"/>
</dbReference>
<dbReference type="InterPro" id="IPR008197">
    <property type="entry name" value="WAP_dom"/>
</dbReference>
<dbReference type="PANTHER" id="PTHR45938">
    <property type="entry name" value="ACP24A4-RELATED"/>
    <property type="match status" value="1"/>
</dbReference>
<dbReference type="PANTHER" id="PTHR45938:SF11">
    <property type="entry name" value="WAP, KAZAL, IMMUNOGLOBULIN, KUNITZ AND NTR DOMAIN-CONTAINING PROTEIN 2-LIKE"/>
    <property type="match status" value="1"/>
</dbReference>
<dbReference type="Pfam" id="PF00095">
    <property type="entry name" value="WAP"/>
    <property type="match status" value="1"/>
</dbReference>
<dbReference type="PRINTS" id="PR00003">
    <property type="entry name" value="4DISULPHCORE"/>
</dbReference>
<dbReference type="SMART" id="SM00217">
    <property type="entry name" value="WAP"/>
    <property type="match status" value="1"/>
</dbReference>
<dbReference type="SUPFAM" id="SSF57256">
    <property type="entry name" value="Elafin-like"/>
    <property type="match status" value="1"/>
</dbReference>
<dbReference type="PROSITE" id="PS51390">
    <property type="entry name" value="WAP"/>
    <property type="match status" value="1"/>
</dbReference>